<gene>
    <name evidence="1" type="primary">ribH</name>
    <name type="ordered locus">ECSE_0437</name>
</gene>
<accession>B6HZL6</accession>
<name>RISB_ECOSE</name>
<comment type="function">
    <text evidence="1">Catalyzes the formation of 6,7-dimethyl-8-ribityllumazine by condensation of 5-amino-6-(D-ribitylamino)uracil with 3,4-dihydroxy-2-butanone 4-phosphate. This is the penultimate step in the biosynthesis of riboflavin.</text>
</comment>
<comment type="catalytic activity">
    <reaction evidence="1">
        <text>(2S)-2-hydroxy-3-oxobutyl phosphate + 5-amino-6-(D-ribitylamino)uracil = 6,7-dimethyl-8-(1-D-ribityl)lumazine + phosphate + 2 H2O + H(+)</text>
        <dbReference type="Rhea" id="RHEA:26152"/>
        <dbReference type="ChEBI" id="CHEBI:15377"/>
        <dbReference type="ChEBI" id="CHEBI:15378"/>
        <dbReference type="ChEBI" id="CHEBI:15934"/>
        <dbReference type="ChEBI" id="CHEBI:43474"/>
        <dbReference type="ChEBI" id="CHEBI:58201"/>
        <dbReference type="ChEBI" id="CHEBI:58830"/>
        <dbReference type="EC" id="2.5.1.78"/>
    </reaction>
</comment>
<comment type="pathway">
    <text evidence="1">Cofactor biosynthesis; riboflavin biosynthesis; riboflavin from 2-hydroxy-3-oxobutyl phosphate and 5-amino-6-(D-ribitylamino)uracil: step 1/2.</text>
</comment>
<comment type="subunit">
    <text evidence="1">Forms an icosahedral capsid composed of 60 subunits, arranged as a dodecamer of pentamers.</text>
</comment>
<comment type="similarity">
    <text evidence="1">Belongs to the DMRL synthase family.</text>
</comment>
<organism>
    <name type="scientific">Escherichia coli (strain SE11)</name>
    <dbReference type="NCBI Taxonomy" id="409438"/>
    <lineage>
        <taxon>Bacteria</taxon>
        <taxon>Pseudomonadati</taxon>
        <taxon>Pseudomonadota</taxon>
        <taxon>Gammaproteobacteria</taxon>
        <taxon>Enterobacterales</taxon>
        <taxon>Enterobacteriaceae</taxon>
        <taxon>Escherichia</taxon>
    </lineage>
</organism>
<keyword id="KW-0686">Riboflavin biosynthesis</keyword>
<keyword id="KW-0808">Transferase</keyword>
<reference key="1">
    <citation type="journal article" date="2008" name="DNA Res.">
        <title>Complete genome sequence and comparative analysis of the wild-type commensal Escherichia coli strain SE11 isolated from a healthy adult.</title>
        <authorList>
            <person name="Oshima K."/>
            <person name="Toh H."/>
            <person name="Ogura Y."/>
            <person name="Sasamoto H."/>
            <person name="Morita H."/>
            <person name="Park S.-H."/>
            <person name="Ooka T."/>
            <person name="Iyoda S."/>
            <person name="Taylor T.D."/>
            <person name="Hayashi T."/>
            <person name="Itoh K."/>
            <person name="Hattori M."/>
        </authorList>
    </citation>
    <scope>NUCLEOTIDE SEQUENCE [LARGE SCALE GENOMIC DNA]</scope>
    <source>
        <strain>SE11</strain>
    </source>
</reference>
<feature type="chain" id="PRO_1000098189" description="6,7-dimethyl-8-ribityllumazine synthase">
    <location>
        <begin position="1"/>
        <end position="156"/>
    </location>
</feature>
<feature type="active site" description="Proton donor" evidence="1">
    <location>
        <position position="89"/>
    </location>
</feature>
<feature type="binding site" evidence="1">
    <location>
        <position position="22"/>
    </location>
    <ligand>
        <name>5-amino-6-(D-ribitylamino)uracil</name>
        <dbReference type="ChEBI" id="CHEBI:15934"/>
    </ligand>
</feature>
<feature type="binding site" evidence="1">
    <location>
        <begin position="57"/>
        <end position="59"/>
    </location>
    <ligand>
        <name>5-amino-6-(D-ribitylamino)uracil</name>
        <dbReference type="ChEBI" id="CHEBI:15934"/>
    </ligand>
</feature>
<feature type="binding site" evidence="1">
    <location>
        <begin position="81"/>
        <end position="83"/>
    </location>
    <ligand>
        <name>5-amino-6-(D-ribitylamino)uracil</name>
        <dbReference type="ChEBI" id="CHEBI:15934"/>
    </ligand>
</feature>
<feature type="binding site" evidence="1">
    <location>
        <begin position="86"/>
        <end position="87"/>
    </location>
    <ligand>
        <name>(2S)-2-hydroxy-3-oxobutyl phosphate</name>
        <dbReference type="ChEBI" id="CHEBI:58830"/>
    </ligand>
</feature>
<feature type="binding site" evidence="1">
    <location>
        <position position="114"/>
    </location>
    <ligand>
        <name>5-amino-6-(D-ribitylamino)uracil</name>
        <dbReference type="ChEBI" id="CHEBI:15934"/>
    </ligand>
</feature>
<feature type="binding site" evidence="1">
    <location>
        <position position="128"/>
    </location>
    <ligand>
        <name>(2S)-2-hydroxy-3-oxobutyl phosphate</name>
        <dbReference type="ChEBI" id="CHEBI:58830"/>
    </ligand>
</feature>
<sequence>MNIIEANVATPDARVAITIARFNNFINDSLLEGAIDALKRIGQVKDENITVVWVPGAYELPLAAGALAKTGKYDAVIALGTVIRGGTAHFEYVAGGASNGLAHVAQDSEIPVAFGVLTTESIEQAIERAGTKAGNKGAEAALTALEMINVLKAIKA</sequence>
<dbReference type="EC" id="2.5.1.78" evidence="1"/>
<dbReference type="EMBL" id="AP009240">
    <property type="protein sequence ID" value="BAG75961.1"/>
    <property type="molecule type" value="Genomic_DNA"/>
</dbReference>
<dbReference type="SMR" id="B6HZL6"/>
<dbReference type="KEGG" id="ecy:ECSE_0437"/>
<dbReference type="HOGENOM" id="CLU_089358_1_1_6"/>
<dbReference type="UniPathway" id="UPA00275">
    <property type="reaction ID" value="UER00404"/>
</dbReference>
<dbReference type="Proteomes" id="UP000008199">
    <property type="component" value="Chromosome"/>
</dbReference>
<dbReference type="GO" id="GO:0005829">
    <property type="term" value="C:cytosol"/>
    <property type="evidence" value="ECO:0007669"/>
    <property type="project" value="TreeGrafter"/>
</dbReference>
<dbReference type="GO" id="GO:0009349">
    <property type="term" value="C:riboflavin synthase complex"/>
    <property type="evidence" value="ECO:0007669"/>
    <property type="project" value="InterPro"/>
</dbReference>
<dbReference type="GO" id="GO:0000906">
    <property type="term" value="F:6,7-dimethyl-8-ribityllumazine synthase activity"/>
    <property type="evidence" value="ECO:0007669"/>
    <property type="project" value="UniProtKB-UniRule"/>
</dbReference>
<dbReference type="GO" id="GO:0009231">
    <property type="term" value="P:riboflavin biosynthetic process"/>
    <property type="evidence" value="ECO:0007669"/>
    <property type="project" value="UniProtKB-UniRule"/>
</dbReference>
<dbReference type="CDD" id="cd09209">
    <property type="entry name" value="Lumazine_synthase-I"/>
    <property type="match status" value="1"/>
</dbReference>
<dbReference type="FunFam" id="3.40.50.960:FF:000001">
    <property type="entry name" value="6,7-dimethyl-8-ribityllumazine synthase"/>
    <property type="match status" value="1"/>
</dbReference>
<dbReference type="Gene3D" id="3.40.50.960">
    <property type="entry name" value="Lumazine/riboflavin synthase"/>
    <property type="match status" value="1"/>
</dbReference>
<dbReference type="HAMAP" id="MF_00178">
    <property type="entry name" value="Lumazine_synth"/>
    <property type="match status" value="1"/>
</dbReference>
<dbReference type="InterPro" id="IPR034964">
    <property type="entry name" value="LS"/>
</dbReference>
<dbReference type="InterPro" id="IPR002180">
    <property type="entry name" value="LS/RS"/>
</dbReference>
<dbReference type="InterPro" id="IPR036467">
    <property type="entry name" value="LS/RS_sf"/>
</dbReference>
<dbReference type="NCBIfam" id="TIGR00114">
    <property type="entry name" value="lumazine-synth"/>
    <property type="match status" value="1"/>
</dbReference>
<dbReference type="NCBIfam" id="NF000812">
    <property type="entry name" value="PRK00061.1-4"/>
    <property type="match status" value="1"/>
</dbReference>
<dbReference type="PANTHER" id="PTHR21058:SF0">
    <property type="entry name" value="6,7-DIMETHYL-8-RIBITYLLUMAZINE SYNTHASE"/>
    <property type="match status" value="1"/>
</dbReference>
<dbReference type="PANTHER" id="PTHR21058">
    <property type="entry name" value="6,7-DIMETHYL-8-RIBITYLLUMAZINE SYNTHASE DMRL SYNTHASE LUMAZINE SYNTHASE"/>
    <property type="match status" value="1"/>
</dbReference>
<dbReference type="Pfam" id="PF00885">
    <property type="entry name" value="DMRL_synthase"/>
    <property type="match status" value="1"/>
</dbReference>
<dbReference type="SUPFAM" id="SSF52121">
    <property type="entry name" value="Lumazine synthase"/>
    <property type="match status" value="1"/>
</dbReference>
<protein>
    <recommendedName>
        <fullName evidence="1">6,7-dimethyl-8-ribityllumazine synthase</fullName>
        <shortName evidence="1">DMRL synthase</shortName>
        <shortName evidence="1">LS</shortName>
        <shortName evidence="1">Lumazine synthase</shortName>
        <ecNumber evidence="1">2.5.1.78</ecNumber>
    </recommendedName>
</protein>
<proteinExistence type="inferred from homology"/>
<evidence type="ECO:0000255" key="1">
    <source>
        <dbReference type="HAMAP-Rule" id="MF_00178"/>
    </source>
</evidence>